<comment type="catalytic activity">
    <reaction evidence="1">
        <text>beta-D-fructose 1,6-bisphosphate + H2O = beta-D-fructose 6-phosphate + phosphate</text>
        <dbReference type="Rhea" id="RHEA:11064"/>
        <dbReference type="ChEBI" id="CHEBI:15377"/>
        <dbReference type="ChEBI" id="CHEBI:32966"/>
        <dbReference type="ChEBI" id="CHEBI:43474"/>
        <dbReference type="ChEBI" id="CHEBI:57634"/>
        <dbReference type="EC" id="3.1.3.11"/>
    </reaction>
</comment>
<comment type="cofactor">
    <cofactor evidence="1">
        <name>Mg(2+)</name>
        <dbReference type="ChEBI" id="CHEBI:18420"/>
    </cofactor>
    <text evidence="1">Binds 2 magnesium ions per subunit.</text>
</comment>
<comment type="pathway">
    <text evidence="1">Carbohydrate biosynthesis; gluconeogenesis.</text>
</comment>
<comment type="subunit">
    <text evidence="1">Homotetramer.</text>
</comment>
<comment type="subcellular location">
    <subcellularLocation>
        <location evidence="1">Cytoplasm</location>
    </subcellularLocation>
</comment>
<comment type="similarity">
    <text evidence="1">Belongs to the FBPase class 1 family.</text>
</comment>
<comment type="sequence caution" evidence="2">
    <conflict type="erroneous initiation">
        <sequence resource="EMBL-CDS" id="AAM84252"/>
    </conflict>
</comment>
<comment type="sequence caution" evidence="2">
    <conflict type="erroneous initiation">
        <sequence resource="EMBL-CDS" id="AAS60833"/>
    </conflict>
</comment>
<protein>
    <recommendedName>
        <fullName evidence="1">Fructose-1,6-bisphosphatase class 1</fullName>
        <shortName evidence="1">FBPase class 1</shortName>
        <ecNumber evidence="1">3.1.3.11</ecNumber>
    </recommendedName>
    <alternativeName>
        <fullName evidence="1">D-fructose-1,6-bisphosphate 1-phosphohydrolase class 1</fullName>
    </alternativeName>
</protein>
<sequence length="337" mass="36996">MKTLGEFIVEKQLDFSHATGELTALLSAIKLGAKIIHRDINKAGLVDILGASGVSNIQGEDQMKLDLFANEKLKAALKARGEVAGIASEEEDDIVIFDGGRAENAKYVVLMDPLDGSSNIDVNVSVGTIFSIYRRITPFGTPITEEDFLQPGTKQVTAGYVVYGSSTMLVYTTGYGVHAFTYDPSLGVFCLSHEKVRYPATGCMYSINEGNYIKFPLGVKKYIKYCQEQDEATKRPYTSRYIGSLVADFHRNLLKGGIYIYPSTASHPQGKLRLLYECNPMAFLAEQAGGKATDGVNRILDIVPEKLHQRAPFFVGTKSMVEDAEGFIAKFPDEEAK</sequence>
<accession>Q0WBC9</accession>
<accession>Q74X89</accession>
<accession>Q8D1D8</accession>
<evidence type="ECO:0000255" key="1">
    <source>
        <dbReference type="HAMAP-Rule" id="MF_01855"/>
    </source>
</evidence>
<evidence type="ECO:0000305" key="2"/>
<reference key="1">
    <citation type="journal article" date="2001" name="Nature">
        <title>Genome sequence of Yersinia pestis, the causative agent of plague.</title>
        <authorList>
            <person name="Parkhill J."/>
            <person name="Wren B.W."/>
            <person name="Thomson N.R."/>
            <person name="Titball R.W."/>
            <person name="Holden M.T.G."/>
            <person name="Prentice M.B."/>
            <person name="Sebaihia M."/>
            <person name="James K.D."/>
            <person name="Churcher C.M."/>
            <person name="Mungall K.L."/>
            <person name="Baker S."/>
            <person name="Basham D."/>
            <person name="Bentley S.D."/>
            <person name="Brooks K."/>
            <person name="Cerdeno-Tarraga A.-M."/>
            <person name="Chillingworth T."/>
            <person name="Cronin A."/>
            <person name="Davies R.M."/>
            <person name="Davis P."/>
            <person name="Dougan G."/>
            <person name="Feltwell T."/>
            <person name="Hamlin N."/>
            <person name="Holroyd S."/>
            <person name="Jagels K."/>
            <person name="Karlyshev A.V."/>
            <person name="Leather S."/>
            <person name="Moule S."/>
            <person name="Oyston P.C.F."/>
            <person name="Quail M.A."/>
            <person name="Rutherford K.M."/>
            <person name="Simmonds M."/>
            <person name="Skelton J."/>
            <person name="Stevens K."/>
            <person name="Whitehead S."/>
            <person name="Barrell B.G."/>
        </authorList>
    </citation>
    <scope>NUCLEOTIDE SEQUENCE [LARGE SCALE GENOMIC DNA]</scope>
    <source>
        <strain>CO-92 / Biovar Orientalis</strain>
    </source>
</reference>
<reference key="2">
    <citation type="journal article" date="2002" name="J. Bacteriol.">
        <title>Genome sequence of Yersinia pestis KIM.</title>
        <authorList>
            <person name="Deng W."/>
            <person name="Burland V."/>
            <person name="Plunkett G. III"/>
            <person name="Boutin A."/>
            <person name="Mayhew G.F."/>
            <person name="Liss P."/>
            <person name="Perna N.T."/>
            <person name="Rose D.J."/>
            <person name="Mau B."/>
            <person name="Zhou S."/>
            <person name="Schwartz D.C."/>
            <person name="Fetherston J.D."/>
            <person name="Lindler L.E."/>
            <person name="Brubaker R.R."/>
            <person name="Plano G.V."/>
            <person name="Straley S.C."/>
            <person name="McDonough K.A."/>
            <person name="Nilles M.L."/>
            <person name="Matson J.S."/>
            <person name="Blattner F.R."/>
            <person name="Perry R.D."/>
        </authorList>
    </citation>
    <scope>NUCLEOTIDE SEQUENCE [LARGE SCALE GENOMIC DNA]</scope>
    <source>
        <strain>KIM10+ / Biovar Mediaevalis</strain>
    </source>
</reference>
<reference key="3">
    <citation type="journal article" date="2004" name="DNA Res.">
        <title>Complete genome sequence of Yersinia pestis strain 91001, an isolate avirulent to humans.</title>
        <authorList>
            <person name="Song Y."/>
            <person name="Tong Z."/>
            <person name="Wang J."/>
            <person name="Wang L."/>
            <person name="Guo Z."/>
            <person name="Han Y."/>
            <person name="Zhang J."/>
            <person name="Pei D."/>
            <person name="Zhou D."/>
            <person name="Qin H."/>
            <person name="Pang X."/>
            <person name="Han Y."/>
            <person name="Zhai J."/>
            <person name="Li M."/>
            <person name="Cui B."/>
            <person name="Qi Z."/>
            <person name="Jin L."/>
            <person name="Dai R."/>
            <person name="Chen F."/>
            <person name="Li S."/>
            <person name="Ye C."/>
            <person name="Du Z."/>
            <person name="Lin W."/>
            <person name="Wang J."/>
            <person name="Yu J."/>
            <person name="Yang H."/>
            <person name="Wang J."/>
            <person name="Huang P."/>
            <person name="Yang R."/>
        </authorList>
    </citation>
    <scope>NUCLEOTIDE SEQUENCE [LARGE SCALE GENOMIC DNA]</scope>
    <source>
        <strain>91001 / Biovar Mediaevalis</strain>
    </source>
</reference>
<name>F16PA_YERPE</name>
<feature type="chain" id="PRO_0000364759" description="Fructose-1,6-bisphosphatase class 1">
    <location>
        <begin position="1"/>
        <end position="337"/>
    </location>
</feature>
<feature type="binding site" evidence="1">
    <location>
        <position position="89"/>
    </location>
    <ligand>
        <name>Mg(2+)</name>
        <dbReference type="ChEBI" id="CHEBI:18420"/>
        <label>1</label>
    </ligand>
</feature>
<feature type="binding site" evidence="1">
    <location>
        <position position="112"/>
    </location>
    <ligand>
        <name>Mg(2+)</name>
        <dbReference type="ChEBI" id="CHEBI:18420"/>
        <label>1</label>
    </ligand>
</feature>
<feature type="binding site" evidence="1">
    <location>
        <position position="112"/>
    </location>
    <ligand>
        <name>Mg(2+)</name>
        <dbReference type="ChEBI" id="CHEBI:18420"/>
        <label>2</label>
    </ligand>
</feature>
<feature type="binding site" evidence="1">
    <location>
        <position position="114"/>
    </location>
    <ligand>
        <name>Mg(2+)</name>
        <dbReference type="ChEBI" id="CHEBI:18420"/>
        <label>1</label>
    </ligand>
</feature>
<feature type="binding site" evidence="1">
    <location>
        <begin position="115"/>
        <end position="118"/>
    </location>
    <ligand>
        <name>substrate</name>
    </ligand>
</feature>
<feature type="binding site" evidence="1">
    <location>
        <position position="115"/>
    </location>
    <ligand>
        <name>Mg(2+)</name>
        <dbReference type="ChEBI" id="CHEBI:18420"/>
        <label>2</label>
    </ligand>
</feature>
<feature type="binding site" evidence="1">
    <location>
        <position position="208"/>
    </location>
    <ligand>
        <name>substrate</name>
    </ligand>
</feature>
<feature type="binding site" evidence="1">
    <location>
        <position position="241"/>
    </location>
    <ligand>
        <name>substrate</name>
    </ligand>
</feature>
<feature type="binding site" evidence="1">
    <location>
        <position position="271"/>
    </location>
    <ligand>
        <name>substrate</name>
    </ligand>
</feature>
<feature type="binding site" evidence="1">
    <location>
        <position position="277"/>
    </location>
    <ligand>
        <name>Mg(2+)</name>
        <dbReference type="ChEBI" id="CHEBI:18420"/>
        <label>2</label>
    </ligand>
</feature>
<keyword id="KW-0119">Carbohydrate metabolism</keyword>
<keyword id="KW-0963">Cytoplasm</keyword>
<keyword id="KW-0378">Hydrolase</keyword>
<keyword id="KW-0460">Magnesium</keyword>
<keyword id="KW-0479">Metal-binding</keyword>
<keyword id="KW-1185">Reference proteome</keyword>
<gene>
    <name evidence="1" type="primary">fbp</name>
    <name type="ordered locus">YPO3520</name>
    <name type="ordered locus">y0664</name>
    <name type="ordered locus">YP_0563</name>
</gene>
<proteinExistence type="inferred from homology"/>
<organism>
    <name type="scientific">Yersinia pestis</name>
    <dbReference type="NCBI Taxonomy" id="632"/>
    <lineage>
        <taxon>Bacteria</taxon>
        <taxon>Pseudomonadati</taxon>
        <taxon>Pseudomonadota</taxon>
        <taxon>Gammaproteobacteria</taxon>
        <taxon>Enterobacterales</taxon>
        <taxon>Yersiniaceae</taxon>
        <taxon>Yersinia</taxon>
    </lineage>
</organism>
<dbReference type="EC" id="3.1.3.11" evidence="1"/>
<dbReference type="EMBL" id="AL590842">
    <property type="protein sequence ID" value="CAL22108.1"/>
    <property type="molecule type" value="Genomic_DNA"/>
</dbReference>
<dbReference type="EMBL" id="AE009952">
    <property type="protein sequence ID" value="AAM84252.1"/>
    <property type="status" value="ALT_INIT"/>
    <property type="molecule type" value="Genomic_DNA"/>
</dbReference>
<dbReference type="EMBL" id="AE017042">
    <property type="protein sequence ID" value="AAS60833.1"/>
    <property type="status" value="ALT_INIT"/>
    <property type="molecule type" value="Genomic_DNA"/>
</dbReference>
<dbReference type="PIR" id="AI0427">
    <property type="entry name" value="AI0427"/>
</dbReference>
<dbReference type="RefSeq" id="WP_002216946.1">
    <property type="nucleotide sequence ID" value="NZ_WUCM01000036.1"/>
</dbReference>
<dbReference type="RefSeq" id="YP_002348409.1">
    <property type="nucleotide sequence ID" value="NC_003143.1"/>
</dbReference>
<dbReference type="SMR" id="Q0WBC9"/>
<dbReference type="STRING" id="214092.YPO3520"/>
<dbReference type="PaxDb" id="214092-YPO3520"/>
<dbReference type="DNASU" id="1145611"/>
<dbReference type="EnsemblBacteria" id="AAS60833">
    <property type="protein sequence ID" value="AAS60833"/>
    <property type="gene ID" value="YP_0563"/>
</dbReference>
<dbReference type="GeneID" id="57975194"/>
<dbReference type="KEGG" id="ype:YPO3520"/>
<dbReference type="KEGG" id="ypj:CH55_3356"/>
<dbReference type="KEGG" id="ypk:y0664"/>
<dbReference type="KEGG" id="ypl:CH46_1568"/>
<dbReference type="KEGG" id="ypm:YP_0563"/>
<dbReference type="KEGG" id="ypw:CH59_2525"/>
<dbReference type="PATRIC" id="fig|214092.21.peg.4015"/>
<dbReference type="eggNOG" id="COG0158">
    <property type="taxonomic scope" value="Bacteria"/>
</dbReference>
<dbReference type="HOGENOM" id="CLU_039977_2_2_6"/>
<dbReference type="OMA" id="YIPENCP"/>
<dbReference type="OrthoDB" id="9806756at2"/>
<dbReference type="UniPathway" id="UPA00138"/>
<dbReference type="Proteomes" id="UP000000815">
    <property type="component" value="Chromosome"/>
</dbReference>
<dbReference type="Proteomes" id="UP000001019">
    <property type="component" value="Chromosome"/>
</dbReference>
<dbReference type="Proteomes" id="UP000002490">
    <property type="component" value="Chromosome"/>
</dbReference>
<dbReference type="GO" id="GO:0005737">
    <property type="term" value="C:cytoplasm"/>
    <property type="evidence" value="ECO:0000318"/>
    <property type="project" value="GO_Central"/>
</dbReference>
<dbReference type="GO" id="GO:0005829">
    <property type="term" value="C:cytosol"/>
    <property type="evidence" value="ECO:0000318"/>
    <property type="project" value="GO_Central"/>
</dbReference>
<dbReference type="GO" id="GO:0042132">
    <property type="term" value="F:fructose 1,6-bisphosphate 1-phosphatase activity"/>
    <property type="evidence" value="ECO:0000318"/>
    <property type="project" value="GO_Central"/>
</dbReference>
<dbReference type="GO" id="GO:0000287">
    <property type="term" value="F:magnesium ion binding"/>
    <property type="evidence" value="ECO:0007669"/>
    <property type="project" value="UniProtKB-UniRule"/>
</dbReference>
<dbReference type="GO" id="GO:0030388">
    <property type="term" value="P:fructose 1,6-bisphosphate metabolic process"/>
    <property type="evidence" value="ECO:0000318"/>
    <property type="project" value="GO_Central"/>
</dbReference>
<dbReference type="GO" id="GO:0006002">
    <property type="term" value="P:fructose 6-phosphate metabolic process"/>
    <property type="evidence" value="ECO:0000318"/>
    <property type="project" value="GO_Central"/>
</dbReference>
<dbReference type="GO" id="GO:0006000">
    <property type="term" value="P:fructose metabolic process"/>
    <property type="evidence" value="ECO:0000318"/>
    <property type="project" value="GO_Central"/>
</dbReference>
<dbReference type="GO" id="GO:0006094">
    <property type="term" value="P:gluconeogenesis"/>
    <property type="evidence" value="ECO:0000318"/>
    <property type="project" value="GO_Central"/>
</dbReference>
<dbReference type="CDD" id="cd00354">
    <property type="entry name" value="FBPase"/>
    <property type="match status" value="1"/>
</dbReference>
<dbReference type="FunFam" id="3.30.540.10:FF:000002">
    <property type="entry name" value="Fructose-1,6-bisphosphatase class 1"/>
    <property type="match status" value="1"/>
</dbReference>
<dbReference type="FunFam" id="3.40.190.80:FF:000001">
    <property type="entry name" value="Fructose-1,6-bisphosphatase class 1"/>
    <property type="match status" value="1"/>
</dbReference>
<dbReference type="Gene3D" id="3.40.190.80">
    <property type="match status" value="1"/>
</dbReference>
<dbReference type="Gene3D" id="3.30.540.10">
    <property type="entry name" value="Fructose-1,6-Bisphosphatase, subunit A, domain 1"/>
    <property type="match status" value="1"/>
</dbReference>
<dbReference type="HAMAP" id="MF_01855">
    <property type="entry name" value="FBPase_class1"/>
    <property type="match status" value="1"/>
</dbReference>
<dbReference type="InterPro" id="IPR044015">
    <property type="entry name" value="FBPase_C_dom"/>
</dbReference>
<dbReference type="InterPro" id="IPR000146">
    <property type="entry name" value="FBPase_class-1"/>
</dbReference>
<dbReference type="InterPro" id="IPR033391">
    <property type="entry name" value="FBPase_N"/>
</dbReference>
<dbReference type="InterPro" id="IPR028343">
    <property type="entry name" value="FBPtase"/>
</dbReference>
<dbReference type="InterPro" id="IPR020548">
    <property type="entry name" value="Fructose_bisphosphatase_AS"/>
</dbReference>
<dbReference type="NCBIfam" id="NF006778">
    <property type="entry name" value="PRK09293.1-1"/>
    <property type="match status" value="1"/>
</dbReference>
<dbReference type="PANTHER" id="PTHR11556">
    <property type="entry name" value="FRUCTOSE-1,6-BISPHOSPHATASE-RELATED"/>
    <property type="match status" value="1"/>
</dbReference>
<dbReference type="PANTHER" id="PTHR11556:SF35">
    <property type="entry name" value="SEDOHEPTULOSE-1,7-BISPHOSPHATASE, CHLOROPLASTIC"/>
    <property type="match status" value="1"/>
</dbReference>
<dbReference type="Pfam" id="PF00316">
    <property type="entry name" value="FBPase"/>
    <property type="match status" value="1"/>
</dbReference>
<dbReference type="Pfam" id="PF18913">
    <property type="entry name" value="FBPase_C"/>
    <property type="match status" value="1"/>
</dbReference>
<dbReference type="PIRSF" id="PIRSF500210">
    <property type="entry name" value="FBPtase"/>
    <property type="match status" value="1"/>
</dbReference>
<dbReference type="PIRSF" id="PIRSF000904">
    <property type="entry name" value="FBPtase_SBPase"/>
    <property type="match status" value="1"/>
</dbReference>
<dbReference type="PRINTS" id="PR00115">
    <property type="entry name" value="F16BPHPHTASE"/>
</dbReference>
<dbReference type="SUPFAM" id="SSF56655">
    <property type="entry name" value="Carbohydrate phosphatase"/>
    <property type="match status" value="1"/>
</dbReference>
<dbReference type="PROSITE" id="PS00124">
    <property type="entry name" value="FBPASE"/>
    <property type="match status" value="1"/>
</dbReference>